<feature type="chain" id="PRO_0000324480" description="Protein SSH4">
    <location>
        <begin position="1"/>
        <end position="494"/>
    </location>
</feature>
<feature type="topological domain" description="Cytoplasmic" evidence="2">
    <location>
        <begin position="1"/>
        <end position="76"/>
    </location>
</feature>
<feature type="transmembrane region" description="Helical; Signal-anchor for type II membrane protein" evidence="2">
    <location>
        <begin position="77"/>
        <end position="97"/>
    </location>
</feature>
<feature type="topological domain" description="Lumenal" evidence="2">
    <location>
        <begin position="98"/>
        <end position="494"/>
    </location>
</feature>
<feature type="domain" description="B30.2/SPRY" evidence="3">
    <location>
        <begin position="140"/>
        <end position="336"/>
    </location>
</feature>
<feature type="region of interest" description="Disordered" evidence="4">
    <location>
        <begin position="374"/>
        <end position="494"/>
    </location>
</feature>
<feature type="compositionally biased region" description="Polar residues" evidence="4">
    <location>
        <begin position="426"/>
        <end position="435"/>
    </location>
</feature>
<feature type="compositionally biased region" description="Polar residues" evidence="4">
    <location>
        <begin position="454"/>
        <end position="464"/>
    </location>
</feature>
<feature type="glycosylation site" description="N-linked (GlcNAc...) asparagine" evidence="2">
    <location>
        <position position="436"/>
    </location>
</feature>
<proteinExistence type="inferred from homology"/>
<reference key="1">
    <citation type="journal article" date="2009" name="Genome Res.">
        <title>Comparative genomic analyses of the human fungal pathogens Coccidioides and their relatives.</title>
        <authorList>
            <person name="Sharpton T.J."/>
            <person name="Stajich J.E."/>
            <person name="Rounsley S.D."/>
            <person name="Gardner M.J."/>
            <person name="Wortman J.R."/>
            <person name="Jordar V.S."/>
            <person name="Maiti R."/>
            <person name="Kodira C.D."/>
            <person name="Neafsey D.E."/>
            <person name="Zeng Q."/>
            <person name="Hung C.-Y."/>
            <person name="McMahan C."/>
            <person name="Muszewska A."/>
            <person name="Grynberg M."/>
            <person name="Mandel M.A."/>
            <person name="Kellner E.M."/>
            <person name="Barker B.M."/>
            <person name="Galgiani J.N."/>
            <person name="Orbach M.J."/>
            <person name="Kirkland T.N."/>
            <person name="Cole G.T."/>
            <person name="Henn M.R."/>
            <person name="Birren B.W."/>
            <person name="Taylor J.W."/>
        </authorList>
    </citation>
    <scope>NUCLEOTIDE SEQUENCE [LARGE SCALE GENOMIC DNA]</scope>
    <source>
        <strain>RS</strain>
    </source>
</reference>
<reference key="2">
    <citation type="journal article" date="2010" name="Genome Res.">
        <title>Population genomic sequencing of Coccidioides fungi reveals recent hybridization and transposon control.</title>
        <authorList>
            <person name="Neafsey D.E."/>
            <person name="Barker B.M."/>
            <person name="Sharpton T.J."/>
            <person name="Stajich J.E."/>
            <person name="Park D.J."/>
            <person name="Whiston E."/>
            <person name="Hung C.-Y."/>
            <person name="McMahan C."/>
            <person name="White J."/>
            <person name="Sykes S."/>
            <person name="Heiman D."/>
            <person name="Young S."/>
            <person name="Zeng Q."/>
            <person name="Abouelleil A."/>
            <person name="Aftuck L."/>
            <person name="Bessette D."/>
            <person name="Brown A."/>
            <person name="FitzGerald M."/>
            <person name="Lui A."/>
            <person name="Macdonald J.P."/>
            <person name="Priest M."/>
            <person name="Orbach M.J."/>
            <person name="Galgiani J.N."/>
            <person name="Kirkland T.N."/>
            <person name="Cole G.T."/>
            <person name="Birren B.W."/>
            <person name="Henn M.R."/>
            <person name="Taylor J.W."/>
            <person name="Rounsley S.D."/>
        </authorList>
    </citation>
    <scope>GENOME REANNOTATION</scope>
    <source>
        <strain>RS</strain>
    </source>
</reference>
<accession>Q1E2D2</accession>
<accession>J3KB88</accession>
<name>SSH4_COCIM</name>
<evidence type="ECO:0000250" key="1"/>
<evidence type="ECO:0000255" key="2"/>
<evidence type="ECO:0000255" key="3">
    <source>
        <dbReference type="PROSITE-ProRule" id="PRU00548"/>
    </source>
</evidence>
<evidence type="ECO:0000256" key="4">
    <source>
        <dbReference type="SAM" id="MobiDB-lite"/>
    </source>
</evidence>
<evidence type="ECO:0000305" key="5"/>
<dbReference type="EMBL" id="GG704916">
    <property type="protein sequence ID" value="EAS32257.3"/>
    <property type="molecule type" value="Genomic_DNA"/>
</dbReference>
<dbReference type="RefSeq" id="XP_001243840.1">
    <property type="nucleotide sequence ID" value="XM_001243839.2"/>
</dbReference>
<dbReference type="SMR" id="Q1E2D2"/>
<dbReference type="FunCoup" id="Q1E2D2">
    <property type="interactions" value="29"/>
</dbReference>
<dbReference type="STRING" id="246410.Q1E2D2"/>
<dbReference type="GlyCosmos" id="Q1E2D2">
    <property type="glycosylation" value="1 site, No reported glycans"/>
</dbReference>
<dbReference type="GeneID" id="4564914"/>
<dbReference type="KEGG" id="cim:CIMG_03281"/>
<dbReference type="VEuPathDB" id="FungiDB:CIMG_03281"/>
<dbReference type="InParanoid" id="Q1E2D2"/>
<dbReference type="OMA" id="FFFKYTR"/>
<dbReference type="OrthoDB" id="258495at2759"/>
<dbReference type="Proteomes" id="UP000001261">
    <property type="component" value="Unassembled WGS sequence"/>
</dbReference>
<dbReference type="GO" id="GO:0010008">
    <property type="term" value="C:endosome membrane"/>
    <property type="evidence" value="ECO:0007669"/>
    <property type="project" value="UniProtKB-SubCell"/>
</dbReference>
<dbReference type="GO" id="GO:0005774">
    <property type="term" value="C:vacuolar membrane"/>
    <property type="evidence" value="ECO:0007669"/>
    <property type="project" value="UniProtKB-SubCell"/>
</dbReference>
<dbReference type="GO" id="GO:0015031">
    <property type="term" value="P:protein transport"/>
    <property type="evidence" value="ECO:0007669"/>
    <property type="project" value="UniProtKB-KW"/>
</dbReference>
<dbReference type="CDD" id="cd12910">
    <property type="entry name" value="SPRY_SSH4_like"/>
    <property type="match status" value="1"/>
</dbReference>
<dbReference type="FunFam" id="2.60.120.920:FF:000065">
    <property type="entry name" value="Ear1p"/>
    <property type="match status" value="1"/>
</dbReference>
<dbReference type="Gene3D" id="2.60.120.920">
    <property type="match status" value="1"/>
</dbReference>
<dbReference type="InterPro" id="IPR001870">
    <property type="entry name" value="B30.2/SPRY"/>
</dbReference>
<dbReference type="InterPro" id="IPR043136">
    <property type="entry name" value="B30.2/SPRY_sf"/>
</dbReference>
<dbReference type="InterPro" id="IPR013320">
    <property type="entry name" value="ConA-like_dom_sf"/>
</dbReference>
<dbReference type="InterPro" id="IPR003877">
    <property type="entry name" value="SPRY_dom"/>
</dbReference>
<dbReference type="InterPro" id="IPR035780">
    <property type="entry name" value="SPRY_Ssh4-like"/>
</dbReference>
<dbReference type="InterPro" id="IPR050618">
    <property type="entry name" value="Ubq-SigPath_Reg"/>
</dbReference>
<dbReference type="PANTHER" id="PTHR12864">
    <property type="entry name" value="RAN BINDING PROTEIN 9-RELATED"/>
    <property type="match status" value="1"/>
</dbReference>
<dbReference type="Pfam" id="PF00622">
    <property type="entry name" value="SPRY"/>
    <property type="match status" value="1"/>
</dbReference>
<dbReference type="SMART" id="SM00449">
    <property type="entry name" value="SPRY"/>
    <property type="match status" value="1"/>
</dbReference>
<dbReference type="SUPFAM" id="SSF49899">
    <property type="entry name" value="Concanavalin A-like lectins/glucanases"/>
    <property type="match status" value="1"/>
</dbReference>
<dbReference type="PROSITE" id="PS50188">
    <property type="entry name" value="B302_SPRY"/>
    <property type="match status" value="1"/>
</dbReference>
<protein>
    <recommendedName>
        <fullName>Protein SSH4</fullName>
    </recommendedName>
</protein>
<comment type="function">
    <text evidence="1">Components of the endosome-vacuole trafficking pathway that regulates nutrient transport. May be involved in processes which determine whether plasma membrane proteins are degraded or routed to the plasma membrane (By similarity).</text>
</comment>
<comment type="subcellular location">
    <subcellularLocation>
        <location evidence="1">Vacuole membrane</location>
        <topology evidence="1">Single-pass type II membrane protein</topology>
    </subcellularLocation>
    <subcellularLocation>
        <location evidence="1">Endosome membrane</location>
        <topology evidence="1">Single-pass type II membrane protein</topology>
    </subcellularLocation>
</comment>
<comment type="similarity">
    <text evidence="5">Belongs to the SSH4 family.</text>
</comment>
<sequence>MFSRDDLVTTLTTSLIQGTPAPSSQSSIHRRFGSFQQATEPVNHGYRPSRVSASEKSIMFSLGGNVGSTGKGILIGILSALGSAGIAIIVLSLVFFLRYTHRGRIILDRLGRPGEYDDEQAFAREEAEALESMDELQQAEYMRAKAFIQANPPESAQTDISLSQFLAIQEKGVSAWEFEPELEIANCFVEARTEIEFFDSECSVQSNLPVPKQNEVYYWEAKIYDKPETSLISIGMTTKPYPLFRLPGFHKTSISYQSTGHRRHNQPFTPTLYGPEFVQGDVVGVGYRPRSGTIFFTRNGKKLEDVAHGLKSQNFFPTVGANGPCTVHVNFGQLGFVFIEANVKKWGLAPMTGSLAPPPPYGSEQGSILLETGRENSQTPQWWGSAHSRTRSGTIRLGQGGPVRSPTDISLAPLPHISPPHDVGEGTSNSAQAGENDSDVDAAILDQPPPEYSSPATSPPNGQSGDARIDIHPDPNDPPIPSYDAAVLQQQQQV</sequence>
<gene>
    <name type="primary">SSH4</name>
    <name type="ORF">CIMG_03281</name>
</gene>
<keyword id="KW-0967">Endosome</keyword>
<keyword id="KW-0325">Glycoprotein</keyword>
<keyword id="KW-0472">Membrane</keyword>
<keyword id="KW-0653">Protein transport</keyword>
<keyword id="KW-1185">Reference proteome</keyword>
<keyword id="KW-0735">Signal-anchor</keyword>
<keyword id="KW-0812">Transmembrane</keyword>
<keyword id="KW-1133">Transmembrane helix</keyword>
<keyword id="KW-0813">Transport</keyword>
<keyword id="KW-0926">Vacuole</keyword>
<organism>
    <name type="scientific">Coccidioides immitis (strain RS)</name>
    <name type="common">Valley fever fungus</name>
    <dbReference type="NCBI Taxonomy" id="246410"/>
    <lineage>
        <taxon>Eukaryota</taxon>
        <taxon>Fungi</taxon>
        <taxon>Dikarya</taxon>
        <taxon>Ascomycota</taxon>
        <taxon>Pezizomycotina</taxon>
        <taxon>Eurotiomycetes</taxon>
        <taxon>Eurotiomycetidae</taxon>
        <taxon>Onygenales</taxon>
        <taxon>Onygenaceae</taxon>
        <taxon>Coccidioides</taxon>
    </lineage>
</organism>